<feature type="chain" id="PRO_0000157264" description="Preprotein translocase subunit SecG">
    <location>
        <begin position="1"/>
        <end position="60"/>
    </location>
</feature>
<feature type="topological domain" description="Cytoplasmic" evidence="1">
    <location>
        <begin position="1"/>
        <end position="34"/>
    </location>
</feature>
<feature type="transmembrane region" description="Helical" evidence="1">
    <location>
        <begin position="35"/>
        <end position="54"/>
    </location>
</feature>
<feature type="topological domain" description="Extracellular" evidence="1">
    <location>
        <begin position="55"/>
        <end position="60"/>
    </location>
</feature>
<reference key="1">
    <citation type="journal article" date="1997" name="Nature">
        <title>The complete genome sequence of the hyperthermophilic, sulphate-reducing archaeon Archaeoglobus fulgidus.</title>
        <authorList>
            <person name="Klenk H.-P."/>
            <person name="Clayton R.A."/>
            <person name="Tomb J.-F."/>
            <person name="White O."/>
            <person name="Nelson K.E."/>
            <person name="Ketchum K.A."/>
            <person name="Dodson R.J."/>
            <person name="Gwinn M.L."/>
            <person name="Hickey E.K."/>
            <person name="Peterson J.D."/>
            <person name="Richardson D.L."/>
            <person name="Kerlavage A.R."/>
            <person name="Graham D.E."/>
            <person name="Kyrpides N.C."/>
            <person name="Fleischmann R.D."/>
            <person name="Quackenbush J."/>
            <person name="Lee N.H."/>
            <person name="Sutton G.G."/>
            <person name="Gill S.R."/>
            <person name="Kirkness E.F."/>
            <person name="Dougherty B.A."/>
            <person name="McKenney K."/>
            <person name="Adams M.D."/>
            <person name="Loftus B.J."/>
            <person name="Peterson S.N."/>
            <person name="Reich C.I."/>
            <person name="McNeil L.K."/>
            <person name="Badger J.H."/>
            <person name="Glodek A."/>
            <person name="Zhou L."/>
            <person name="Overbeek R."/>
            <person name="Gocayne J.D."/>
            <person name="Weidman J.F."/>
            <person name="McDonald L.A."/>
            <person name="Utterback T.R."/>
            <person name="Cotton M.D."/>
            <person name="Spriggs T."/>
            <person name="Artiach P."/>
            <person name="Kaine B.P."/>
            <person name="Sykes S.M."/>
            <person name="Sadow P.W."/>
            <person name="D'Andrea K.P."/>
            <person name="Bowman C."/>
            <person name="Fujii C."/>
            <person name="Garland S.A."/>
            <person name="Mason T.M."/>
            <person name="Olsen G.J."/>
            <person name="Fraser C.M."/>
            <person name="Smith H.O."/>
            <person name="Woese C.R."/>
            <person name="Venter J.C."/>
        </authorList>
    </citation>
    <scope>NUCLEOTIDE SEQUENCE [LARGE SCALE GENOMIC DNA]</scope>
    <source>
        <strain>ATCC 49558 / DSM 4304 / JCM 9628 / NBRC 100126 / VC-16</strain>
    </source>
</reference>
<accession>O28498</accession>
<protein>
    <recommendedName>
        <fullName>Preprotein translocase subunit SecG</fullName>
    </recommendedName>
    <alternativeName>
        <fullName>Protein transport protein Sec61 subunit beta homolog</fullName>
    </alternativeName>
</protein>
<sequence length="60" mass="6507">MAKAPKGKAKTPPLMSSAGIMRYFEEEKTQIKVSPKTILAAGIVTGVLIIILNAYYGLWP</sequence>
<keyword id="KW-1003">Cell membrane</keyword>
<keyword id="KW-0472">Membrane</keyword>
<keyword id="KW-0653">Protein transport</keyword>
<keyword id="KW-1185">Reference proteome</keyword>
<keyword id="KW-0811">Translocation</keyword>
<keyword id="KW-0812">Transmembrane</keyword>
<keyword id="KW-1133">Transmembrane helix</keyword>
<keyword id="KW-0813">Transport</keyword>
<comment type="function">
    <text evidence="1">Involved in protein export. The function of the beta subunit is unknown, but it may be involved in stabilization of the trimeric complex (By similarity).</text>
</comment>
<comment type="subunit">
    <text evidence="1">Component of the protein translocase complex. Heterotrimer consisting of alpha (SecY), beta (SecG) and gamma (SecE) subunits. Can form oligomers of the heterotrimer (By similarity).</text>
</comment>
<comment type="subcellular location">
    <subcellularLocation>
        <location evidence="1">Cell membrane</location>
        <topology evidence="1">Single-pass membrane protein</topology>
    </subcellularLocation>
</comment>
<comment type="similarity">
    <text evidence="2">Belongs to the SEC61-beta family.</text>
</comment>
<comment type="sequence caution" evidence="2">
    <conflict type="erroneous initiation">
        <sequence resource="EMBL-CDS" id="AAB89483"/>
    </conflict>
</comment>
<proteinExistence type="inferred from homology"/>
<name>SECG_ARCFU</name>
<organism>
    <name type="scientific">Archaeoglobus fulgidus (strain ATCC 49558 / DSM 4304 / JCM 9628 / NBRC 100126 / VC-16)</name>
    <dbReference type="NCBI Taxonomy" id="224325"/>
    <lineage>
        <taxon>Archaea</taxon>
        <taxon>Methanobacteriati</taxon>
        <taxon>Methanobacteriota</taxon>
        <taxon>Archaeoglobi</taxon>
        <taxon>Archaeoglobales</taxon>
        <taxon>Archaeoglobaceae</taxon>
        <taxon>Archaeoglobus</taxon>
    </lineage>
</organism>
<evidence type="ECO:0000250" key="1"/>
<evidence type="ECO:0000305" key="2"/>
<gene>
    <name type="primary">secG</name>
    <name type="ordered locus">AF_1776</name>
</gene>
<dbReference type="EMBL" id="AE000782">
    <property type="protein sequence ID" value="AAB89483.1"/>
    <property type="status" value="ALT_INIT"/>
    <property type="molecule type" value="Genomic_DNA"/>
</dbReference>
<dbReference type="PIR" id="G69471">
    <property type="entry name" value="G69471"/>
</dbReference>
<dbReference type="RefSeq" id="WP_048064461.1">
    <property type="nucleotide sequence ID" value="NC_000917.1"/>
</dbReference>
<dbReference type="STRING" id="224325.AF_1776"/>
<dbReference type="PaxDb" id="224325-AF_1776"/>
<dbReference type="EnsemblBacteria" id="AAB89483">
    <property type="protein sequence ID" value="AAB89483"/>
    <property type="gene ID" value="AF_1776"/>
</dbReference>
<dbReference type="KEGG" id="afu:AF_1776"/>
<dbReference type="eggNOG" id="arCOG02957">
    <property type="taxonomic scope" value="Archaea"/>
</dbReference>
<dbReference type="HOGENOM" id="CLU_208205_1_0_2"/>
<dbReference type="OrthoDB" id="43651at2157"/>
<dbReference type="PhylomeDB" id="O28498"/>
<dbReference type="Proteomes" id="UP000002199">
    <property type="component" value="Chromosome"/>
</dbReference>
<dbReference type="GO" id="GO:0005886">
    <property type="term" value="C:plasma membrane"/>
    <property type="evidence" value="ECO:0007669"/>
    <property type="project" value="UniProtKB-SubCell"/>
</dbReference>
<dbReference type="GO" id="GO:0015031">
    <property type="term" value="P:protein transport"/>
    <property type="evidence" value="ECO:0007669"/>
    <property type="project" value="UniProtKB-UniRule"/>
</dbReference>
<dbReference type="HAMAP" id="MF_00751">
    <property type="entry name" value="SecG"/>
    <property type="match status" value="1"/>
</dbReference>
<dbReference type="InterPro" id="IPR023531">
    <property type="entry name" value="Preprot_translocase_SecG"/>
</dbReference>
<dbReference type="InterPro" id="IPR016482">
    <property type="entry name" value="SecG/Sec61-beta/Sbh"/>
</dbReference>
<dbReference type="NCBIfam" id="NF002318">
    <property type="entry name" value="PRK01253.1"/>
    <property type="match status" value="1"/>
</dbReference>
<dbReference type="Pfam" id="PF03911">
    <property type="entry name" value="Sec61_beta"/>
    <property type="match status" value="1"/>
</dbReference>